<protein>
    <recommendedName>
        <fullName>Mitochondrial import receptor subunit TOM20 homolog</fullName>
    </recommendedName>
    <alternativeName>
        <fullName>Mitochondrial 20 kDa outer membrane protein</fullName>
    </alternativeName>
    <alternativeName>
        <fullName>Outer mitochondrial membrane receptor TOM20</fullName>
    </alternativeName>
    <alternativeName>
        <fullName>Translocase of outer mitochondrial membrane protein 20</fullName>
    </alternativeName>
</protein>
<proteinExistence type="evidence at protein level"/>
<keyword id="KW-0472">Membrane</keyword>
<keyword id="KW-0496">Mitochondrion</keyword>
<keyword id="KW-1000">Mitochondrion outer membrane</keyword>
<keyword id="KW-0653">Protein transport</keyword>
<keyword id="KW-1185">Reference proteome</keyword>
<keyword id="KW-0812">Transmembrane</keyword>
<keyword id="KW-1133">Transmembrane helix</keyword>
<keyword id="KW-0813">Transport</keyword>
<comment type="function">
    <text evidence="1 5">Central component of the receptor complex responsible for the recognition and translocation of cytosolically synthesized mitochondrial preproteins (By similarity). Together with tomm-22 functions as the transit peptide receptor at the surface of the mitochondrion outer membrane and facilitates the movement of preproteins into the translocation pore (PubMed:21264209).</text>
</comment>
<comment type="subunit">
    <text evidence="2">Forms part of the preprotein translocase complex of the outer mitochondrial membrane (TOM complex).</text>
</comment>
<comment type="interaction">
    <interactant intactId="EBI-320312">
        <id>Q19766</id>
    </interactant>
    <interactant intactId="EBI-320322">
        <id>P34453</id>
        <label>prx-19</label>
    </interactant>
    <organismsDiffer>false</organismsDiffer>
    <experiments>3</experiments>
</comment>
<comment type="subcellular location">
    <subcellularLocation>
        <location evidence="6">Mitochondrion outer membrane</location>
        <topology evidence="6">Single-pass membrane protein</topology>
    </subcellularLocation>
</comment>
<comment type="disruption phenotype">
    <text evidence="5">RNAi-mediated knockdown results in impaired mitochondrial homeostasis with the up-regulation of the mitochondrial unfolded protein chaperone hsp-6 and impaired daf-28/insulin secretion.</text>
</comment>
<comment type="similarity">
    <text evidence="6">Belongs to the Tom20 family.</text>
</comment>
<gene>
    <name evidence="7" type="primary">tomm-20</name>
    <name evidence="7" type="ORF">F23H12.2</name>
</gene>
<accession>Q19766</accession>
<feature type="chain" id="PRO_0000051542" description="Mitochondrial import receptor subunit TOM20 homolog">
    <location>
        <begin position="1"/>
        <end position="188"/>
    </location>
</feature>
<feature type="topological domain" description="Mitochondrial intermembrane" evidence="3">
    <location>
        <begin position="1"/>
        <end position="12"/>
    </location>
</feature>
<feature type="transmembrane region" description="Helical" evidence="3">
    <location>
        <begin position="13"/>
        <end position="31"/>
    </location>
</feature>
<feature type="topological domain" description="Cytoplasmic" evidence="3">
    <location>
        <begin position="32"/>
        <end position="188"/>
    </location>
</feature>
<feature type="region of interest" description="Disordered" evidence="4">
    <location>
        <begin position="42"/>
        <end position="73"/>
    </location>
</feature>
<feature type="region of interest" description="Disordered" evidence="4">
    <location>
        <begin position="156"/>
        <end position="188"/>
    </location>
</feature>
<feature type="compositionally biased region" description="Low complexity" evidence="4">
    <location>
        <begin position="58"/>
        <end position="67"/>
    </location>
</feature>
<name>TOM20_CAEEL</name>
<organism>
    <name type="scientific">Caenorhabditis elegans</name>
    <dbReference type="NCBI Taxonomy" id="6239"/>
    <lineage>
        <taxon>Eukaryota</taxon>
        <taxon>Metazoa</taxon>
        <taxon>Ecdysozoa</taxon>
        <taxon>Nematoda</taxon>
        <taxon>Chromadorea</taxon>
        <taxon>Rhabditida</taxon>
        <taxon>Rhabditina</taxon>
        <taxon>Rhabditomorpha</taxon>
        <taxon>Rhabditoidea</taxon>
        <taxon>Rhabditidae</taxon>
        <taxon>Peloderinae</taxon>
        <taxon>Caenorhabditis</taxon>
    </lineage>
</organism>
<dbReference type="EMBL" id="Z74472">
    <property type="protein sequence ID" value="CAA98945.1"/>
    <property type="molecule type" value="Genomic_DNA"/>
</dbReference>
<dbReference type="PIR" id="T21317">
    <property type="entry name" value="T21317"/>
</dbReference>
<dbReference type="RefSeq" id="NP_506092.1">
    <property type="nucleotide sequence ID" value="NM_073691.6"/>
</dbReference>
<dbReference type="SMR" id="Q19766"/>
<dbReference type="BioGRID" id="44714">
    <property type="interactions" value="18"/>
</dbReference>
<dbReference type="DIP" id="DIP-26815N"/>
<dbReference type="FunCoup" id="Q19766">
    <property type="interactions" value="2799"/>
</dbReference>
<dbReference type="IntAct" id="Q19766">
    <property type="interactions" value="2"/>
</dbReference>
<dbReference type="STRING" id="6239.F23H12.2.1"/>
<dbReference type="PaxDb" id="6239-F23H12.2"/>
<dbReference type="PeptideAtlas" id="Q19766"/>
<dbReference type="EnsemblMetazoa" id="F23H12.2.1">
    <property type="protein sequence ID" value="F23H12.2.1"/>
    <property type="gene ID" value="WBGene00009092"/>
</dbReference>
<dbReference type="GeneID" id="179691"/>
<dbReference type="KEGG" id="cel:CELE_F23H12.2"/>
<dbReference type="UCSC" id="F23H12.2.1">
    <property type="organism name" value="c. elegans"/>
</dbReference>
<dbReference type="AGR" id="WB:WBGene00009092"/>
<dbReference type="CTD" id="179691"/>
<dbReference type="WormBase" id="F23H12.2">
    <property type="protein sequence ID" value="CE05705"/>
    <property type="gene ID" value="WBGene00009092"/>
    <property type="gene designation" value="tomm-20"/>
</dbReference>
<dbReference type="eggNOG" id="KOG4056">
    <property type="taxonomic scope" value="Eukaryota"/>
</dbReference>
<dbReference type="GeneTree" id="ENSGT00390000011698"/>
<dbReference type="HOGENOM" id="CLU_100000_1_1_1"/>
<dbReference type="InParanoid" id="Q19766"/>
<dbReference type="OMA" id="HKRINAP"/>
<dbReference type="OrthoDB" id="2154253at2759"/>
<dbReference type="PhylomeDB" id="Q19766"/>
<dbReference type="Reactome" id="R-CEL-5205685">
    <property type="pathway name" value="PINK1-PRKN Mediated Mitophagy"/>
</dbReference>
<dbReference type="Reactome" id="R-CEL-5689880">
    <property type="pathway name" value="Ub-specific processing proteases"/>
</dbReference>
<dbReference type="SignaLink" id="Q19766"/>
<dbReference type="PRO" id="PR:Q19766"/>
<dbReference type="Proteomes" id="UP000001940">
    <property type="component" value="Chromosome V"/>
</dbReference>
<dbReference type="Bgee" id="WBGene00009092">
    <property type="expression patterns" value="Expressed in germ line (C elegans) and 4 other cell types or tissues"/>
</dbReference>
<dbReference type="GO" id="GO:0005742">
    <property type="term" value="C:mitochondrial outer membrane translocase complex"/>
    <property type="evidence" value="ECO:0000318"/>
    <property type="project" value="GO_Central"/>
</dbReference>
<dbReference type="GO" id="GO:0030943">
    <property type="term" value="F:mitochondrion targeting sequence binding"/>
    <property type="evidence" value="ECO:0000318"/>
    <property type="project" value="GO_Central"/>
</dbReference>
<dbReference type="GO" id="GO:0006886">
    <property type="term" value="P:intracellular protein transport"/>
    <property type="evidence" value="ECO:0007669"/>
    <property type="project" value="InterPro"/>
</dbReference>
<dbReference type="GO" id="GO:0030150">
    <property type="term" value="P:protein import into mitochondrial matrix"/>
    <property type="evidence" value="ECO:0000318"/>
    <property type="project" value="GO_Central"/>
</dbReference>
<dbReference type="GO" id="GO:0016031">
    <property type="term" value="P:tRNA import into mitochondrion"/>
    <property type="evidence" value="ECO:0000318"/>
    <property type="project" value="GO_Central"/>
</dbReference>
<dbReference type="FunFam" id="1.20.960.10:FF:000004">
    <property type="entry name" value="Mitochondrial import receptor subunit TOM20 homolog"/>
    <property type="match status" value="1"/>
</dbReference>
<dbReference type="Gene3D" id="1.20.960.10">
    <property type="entry name" value="Mitochondrial outer membrane translocase complex, subunit Tom20 domain"/>
    <property type="match status" value="1"/>
</dbReference>
<dbReference type="InterPro" id="IPR002056">
    <property type="entry name" value="MAS20"/>
</dbReference>
<dbReference type="InterPro" id="IPR022422">
    <property type="entry name" value="MAS20_rcpt_metazoan"/>
</dbReference>
<dbReference type="InterPro" id="IPR023392">
    <property type="entry name" value="Tom20_dom_sf"/>
</dbReference>
<dbReference type="NCBIfam" id="TIGR00985">
    <property type="entry name" value="3a0801s04tom"/>
    <property type="match status" value="1"/>
</dbReference>
<dbReference type="PANTHER" id="PTHR12430">
    <property type="entry name" value="MITOCHONDRIAL IMPORT RECEPTOR SUBUNIT TOM20"/>
    <property type="match status" value="1"/>
</dbReference>
<dbReference type="PANTHER" id="PTHR12430:SF0">
    <property type="entry name" value="TRANSLOCASE OF OUTER MITOCHONDRIAL MEMBRANE 20"/>
    <property type="match status" value="1"/>
</dbReference>
<dbReference type="Pfam" id="PF02064">
    <property type="entry name" value="MAS20"/>
    <property type="match status" value="1"/>
</dbReference>
<dbReference type="PRINTS" id="PR01989">
    <property type="entry name" value="EUOM20RECPTR"/>
</dbReference>
<dbReference type="PRINTS" id="PR00351">
    <property type="entry name" value="OM20RECEPTOR"/>
</dbReference>
<dbReference type="SUPFAM" id="SSF47157">
    <property type="entry name" value="Mitochondrial import receptor subunit Tom20"/>
    <property type="match status" value="1"/>
</dbReference>
<reference key="1">
    <citation type="journal article" date="1998" name="Science">
        <title>Genome sequence of the nematode C. elegans: a platform for investigating biology.</title>
        <authorList>
            <consortium name="The C. elegans sequencing consortium"/>
        </authorList>
    </citation>
    <scope>NUCLEOTIDE SEQUENCE [LARGE SCALE GENOMIC DNA]</scope>
    <source>
        <strain>Bristol N2</strain>
    </source>
</reference>
<reference key="2">
    <citation type="journal article" date="2011" name="PLoS ONE">
        <title>Mitochondrial function is required for secretion of DAF-28/insulin in C. elegans.</title>
        <authorList>
            <person name="Billing O."/>
            <person name="Kao G."/>
            <person name="Naredi P."/>
        </authorList>
    </citation>
    <scope>FUNCTION</scope>
    <scope>DISRUPTION PHENOTYPE</scope>
</reference>
<sequence length="188" mass="20426">MSDTILGFNKSNVVLAAGIAGAAFLGYCIYFDHKRINAPDYKDKIRQKRRAQAGAGGMAPRRPAAAGNDAAPDVTDPSQMQRFFLQEVQLGEELMAAGNVDEGAVHIANAVMLCGESQQLLSIFQQTLSEDQFRAVVQQLPSTRERLAEMFGAKADEAENEPPMVQYLGDGPPPAQIQELIDDTDDLE</sequence>
<evidence type="ECO:0000250" key="1">
    <source>
        <dbReference type="UniProtKB" id="P35848"/>
    </source>
</evidence>
<evidence type="ECO:0000250" key="2">
    <source>
        <dbReference type="UniProtKB" id="Q15388"/>
    </source>
</evidence>
<evidence type="ECO:0000255" key="3"/>
<evidence type="ECO:0000256" key="4">
    <source>
        <dbReference type="SAM" id="MobiDB-lite"/>
    </source>
</evidence>
<evidence type="ECO:0000269" key="5">
    <source>
    </source>
</evidence>
<evidence type="ECO:0000305" key="6"/>
<evidence type="ECO:0000312" key="7">
    <source>
        <dbReference type="WormBase" id="F23H12.2"/>
    </source>
</evidence>